<sequence>MTDLFSSPDHTLDALGLRCPEPVMMVRKTVRNMQPGETLLIIADDPATTRDIPGFCTFMEHELVAKETDGLPYRYLIRKGG</sequence>
<name>TUSA_ECO81</name>
<comment type="function">
    <text evidence="1">Sulfur carrier protein involved in sulfur trafficking in the cell. Part of a sulfur-relay system required for 2-thiolation during synthesis of 2-thiouridine of the modified wobble base 5-methylaminomethyl-2-thiouridine (mnm(5)s(2)U) in tRNA. Interacts with IscS and stimulates its cysteine desulfurase activity. Accepts an activated sulfur from IscS, which is then transferred to TusD, and thus determines the direction of sulfur flow from IscS to 2-thiouridine formation. Also appears to be involved in sulfur transfer for the biosynthesis of molybdopterin.</text>
</comment>
<comment type="pathway">
    <text evidence="1">tRNA modification.</text>
</comment>
<comment type="subunit">
    <text evidence="1">Interacts with IscS.</text>
</comment>
<comment type="subcellular location">
    <subcellularLocation>
        <location evidence="1">Cytoplasm</location>
    </subcellularLocation>
</comment>
<comment type="similarity">
    <text evidence="1">Belongs to the sulfur carrier protein TusA family.</text>
</comment>
<keyword id="KW-0963">Cytoplasm</keyword>
<keyword id="KW-0819">tRNA processing</keyword>
<proteinExistence type="inferred from homology"/>
<organism>
    <name type="scientific">Escherichia coli O81 (strain ED1a)</name>
    <dbReference type="NCBI Taxonomy" id="585397"/>
    <lineage>
        <taxon>Bacteria</taxon>
        <taxon>Pseudomonadati</taxon>
        <taxon>Pseudomonadota</taxon>
        <taxon>Gammaproteobacteria</taxon>
        <taxon>Enterobacterales</taxon>
        <taxon>Enterobacteriaceae</taxon>
        <taxon>Escherichia</taxon>
    </lineage>
</organism>
<dbReference type="EMBL" id="CU928162">
    <property type="protein sequence ID" value="CAR10278.2"/>
    <property type="molecule type" value="Genomic_DNA"/>
</dbReference>
<dbReference type="RefSeq" id="WP_000130621.1">
    <property type="nucleotide sequence ID" value="NC_011745.1"/>
</dbReference>
<dbReference type="SMR" id="B7N1Q8"/>
<dbReference type="GeneID" id="93778521"/>
<dbReference type="KEGG" id="ecq:ECED1_4143"/>
<dbReference type="HOGENOM" id="CLU_165255_5_0_6"/>
<dbReference type="Proteomes" id="UP000000748">
    <property type="component" value="Chromosome"/>
</dbReference>
<dbReference type="GO" id="GO:0005737">
    <property type="term" value="C:cytoplasm"/>
    <property type="evidence" value="ECO:0007669"/>
    <property type="project" value="UniProtKB-SubCell"/>
</dbReference>
<dbReference type="GO" id="GO:0097163">
    <property type="term" value="F:sulfur carrier activity"/>
    <property type="evidence" value="ECO:0007669"/>
    <property type="project" value="UniProtKB-UniRule"/>
</dbReference>
<dbReference type="GO" id="GO:0002143">
    <property type="term" value="P:tRNA wobble position uridine thiolation"/>
    <property type="evidence" value="ECO:0007669"/>
    <property type="project" value="InterPro"/>
</dbReference>
<dbReference type="CDD" id="cd03423">
    <property type="entry name" value="SirA"/>
    <property type="match status" value="1"/>
</dbReference>
<dbReference type="FunFam" id="3.30.110.40:FF:000002">
    <property type="entry name" value="Sulfur carrier protein TusA"/>
    <property type="match status" value="1"/>
</dbReference>
<dbReference type="Gene3D" id="3.30.110.40">
    <property type="entry name" value="TusA-like domain"/>
    <property type="match status" value="1"/>
</dbReference>
<dbReference type="HAMAP" id="MF_00413">
    <property type="entry name" value="Thiourid_synth_A"/>
    <property type="match status" value="1"/>
</dbReference>
<dbReference type="InterPro" id="IPR022931">
    <property type="entry name" value="Sulphur_carrier_TusA"/>
</dbReference>
<dbReference type="InterPro" id="IPR001455">
    <property type="entry name" value="TusA-like"/>
</dbReference>
<dbReference type="InterPro" id="IPR036868">
    <property type="entry name" value="TusA-like_sf"/>
</dbReference>
<dbReference type="NCBIfam" id="NF001423">
    <property type="entry name" value="PRK00299.1"/>
    <property type="match status" value="1"/>
</dbReference>
<dbReference type="PANTHER" id="PTHR33279:SF2">
    <property type="entry name" value="SULFUR CARRIER PROTEIN TUSA"/>
    <property type="match status" value="1"/>
</dbReference>
<dbReference type="PANTHER" id="PTHR33279">
    <property type="entry name" value="SULFUR CARRIER PROTEIN YEDF-RELATED"/>
    <property type="match status" value="1"/>
</dbReference>
<dbReference type="Pfam" id="PF01206">
    <property type="entry name" value="TusA"/>
    <property type="match status" value="1"/>
</dbReference>
<dbReference type="SUPFAM" id="SSF64307">
    <property type="entry name" value="SirA-like"/>
    <property type="match status" value="1"/>
</dbReference>
<dbReference type="PROSITE" id="PS01148">
    <property type="entry name" value="UPF0033"/>
    <property type="match status" value="1"/>
</dbReference>
<accession>B7N1Q8</accession>
<reference key="1">
    <citation type="journal article" date="2009" name="PLoS Genet.">
        <title>Organised genome dynamics in the Escherichia coli species results in highly diverse adaptive paths.</title>
        <authorList>
            <person name="Touchon M."/>
            <person name="Hoede C."/>
            <person name="Tenaillon O."/>
            <person name="Barbe V."/>
            <person name="Baeriswyl S."/>
            <person name="Bidet P."/>
            <person name="Bingen E."/>
            <person name="Bonacorsi S."/>
            <person name="Bouchier C."/>
            <person name="Bouvet O."/>
            <person name="Calteau A."/>
            <person name="Chiapello H."/>
            <person name="Clermont O."/>
            <person name="Cruveiller S."/>
            <person name="Danchin A."/>
            <person name="Diard M."/>
            <person name="Dossat C."/>
            <person name="Karoui M.E."/>
            <person name="Frapy E."/>
            <person name="Garry L."/>
            <person name="Ghigo J.M."/>
            <person name="Gilles A.M."/>
            <person name="Johnson J."/>
            <person name="Le Bouguenec C."/>
            <person name="Lescat M."/>
            <person name="Mangenot S."/>
            <person name="Martinez-Jehanne V."/>
            <person name="Matic I."/>
            <person name="Nassif X."/>
            <person name="Oztas S."/>
            <person name="Petit M.A."/>
            <person name="Pichon C."/>
            <person name="Rouy Z."/>
            <person name="Ruf C.S."/>
            <person name="Schneider D."/>
            <person name="Tourret J."/>
            <person name="Vacherie B."/>
            <person name="Vallenet D."/>
            <person name="Medigue C."/>
            <person name="Rocha E.P.C."/>
            <person name="Denamur E."/>
        </authorList>
    </citation>
    <scope>NUCLEOTIDE SEQUENCE [LARGE SCALE GENOMIC DNA]</scope>
    <source>
        <strain>ED1a</strain>
    </source>
</reference>
<feature type="chain" id="PRO_1000199921" description="Sulfur carrier protein TusA">
    <location>
        <begin position="1"/>
        <end position="81"/>
    </location>
</feature>
<feature type="active site" description="Cysteine persulfide intermediate" evidence="1">
    <location>
        <position position="19"/>
    </location>
</feature>
<gene>
    <name evidence="1" type="primary">tusA</name>
    <name type="ordered locus">ECED1_4143</name>
</gene>
<protein>
    <recommendedName>
        <fullName evidence="1">Sulfur carrier protein TusA</fullName>
    </recommendedName>
    <alternativeName>
        <fullName evidence="1">Sulfur mediator TusA</fullName>
    </alternativeName>
    <alternativeName>
        <fullName evidence="1">Sulfur transfer protein TusA</fullName>
    </alternativeName>
    <alternativeName>
        <fullName evidence="1">tRNA 2-thiouridine synthesizing protein A</fullName>
    </alternativeName>
</protein>
<evidence type="ECO:0000255" key="1">
    <source>
        <dbReference type="HAMAP-Rule" id="MF_00413"/>
    </source>
</evidence>